<proteinExistence type="evidence at protein level"/>
<gene>
    <name type="primary">CASP7</name>
    <name type="synonym">MCH3</name>
</gene>
<feature type="initiator methionine" description="Removed" evidence="3">
    <location>
        <position position="1"/>
    </location>
</feature>
<feature type="propeptide" id="PRO_0000004620" description="N-terminally processed" evidence="6">
    <location>
        <begin position="2"/>
        <end position="23"/>
    </location>
</feature>
<feature type="chain" id="PRO_0000004621" description="Caspase-7 subunit p20" evidence="3">
    <location>
        <begin position="24"/>
        <end position="198"/>
    </location>
</feature>
<feature type="propeptide" id="PRO_0000004622" evidence="3">
    <location>
        <begin position="199"/>
        <end position="206"/>
    </location>
</feature>
<feature type="chain" id="PRO_0000004623" description="Caspase-7 subunit p11">
    <location>
        <begin position="207"/>
        <end position="303"/>
    </location>
</feature>
<feature type="region of interest" description="Disordered" evidence="5">
    <location>
        <begin position="1"/>
        <end position="27"/>
    </location>
</feature>
<feature type="region of interest" description="Exosite" evidence="3">
    <location>
        <begin position="38"/>
        <end position="41"/>
    </location>
</feature>
<feature type="region of interest" description="Loop L1" evidence="3">
    <location>
        <begin position="76"/>
        <end position="87"/>
    </location>
</feature>
<feature type="region of interest" description="Loop L2" evidence="3">
    <location>
        <begin position="187"/>
        <end position="196"/>
    </location>
</feature>
<feature type="region of interest" description="Loop L3" evidence="3">
    <location>
        <begin position="226"/>
        <end position="238"/>
    </location>
</feature>
<feature type="region of interest" description="Loop L4" evidence="3">
    <location>
        <begin position="274"/>
        <end position="288"/>
    </location>
</feature>
<feature type="compositionally biased region" description="Basic and acidic residues" evidence="5">
    <location>
        <begin position="10"/>
        <end position="27"/>
    </location>
</feature>
<feature type="active site" evidence="1">
    <location>
        <position position="144"/>
    </location>
</feature>
<feature type="active site" evidence="3">
    <location>
        <position position="186"/>
    </location>
</feature>
<feature type="site" description="Cleavage; by CAPN1" evidence="3">
    <location>
        <begin position="36"/>
        <end position="37"/>
    </location>
</feature>
<feature type="site" description="Cleavage; by CAPN1" evidence="3">
    <location>
        <begin position="45"/>
        <end position="46"/>
    </location>
</feature>
<feature type="site" description="Cleavage; by CAPN1" evidence="3">
    <location>
        <begin position="47"/>
        <end position="48"/>
    </location>
</feature>
<feature type="site" description="Involved in allosteric regulation" evidence="3">
    <location>
        <position position="187"/>
    </location>
</feature>
<feature type="site" description="Involved in allosteric regulation" evidence="3">
    <location>
        <position position="223"/>
    </location>
</feature>
<feature type="modified residue" description="N-acetylalanine" evidence="3">
    <location>
        <position position="2"/>
    </location>
</feature>
<feature type="modified residue" description="Phosphoserine" evidence="3">
    <location>
        <position position="30"/>
    </location>
</feature>
<feature type="modified residue" description="Phosphothreonine" evidence="3">
    <location>
        <position position="173"/>
    </location>
</feature>
<feature type="modified residue" description="Phosphoserine" evidence="3">
    <location>
        <position position="239"/>
    </location>
</feature>
<sequence length="303" mass="34038">MADDQNCAPELEKADPSGEDGVDAKPDRSSIISSILGKKKKNASACPVKTARDRVPTYLYRMDFEKMGKCIIINNKNFDKVTGMDVRNGTDKDAEALFKCFRSLGFDVVVYNDCSCAKMQDLLRKASEEDHSNSACFACVLLSHGEENLIYGKDGVTPIKDLTAHFRGDRCKTLLEKPKLFFIQACRGTELDDGVQADSGPINETDANPRYKIPVEADFLFAYSTVPGYYSWRNPGKGSWFVQALCSILDEHGKDLEIMQILTRVNDRVARHFESQCDDPCFNEKKQIPCMVSMLTKELYFGR</sequence>
<accession>P55214</accession>
<comment type="function">
    <text evidence="3 4">Thiol protease involved in different programmed cell death processes, such as apoptosis, pyroptosis or granzyme-mediated programmed cell death, by proteolytically cleaving target proteins. Has a marked preference for Asp-Glu-Val-Asp (DEVD) consensus sequences, with some plasticity for alternate non-canonical sequences. Its involvement in the different programmed cell death processes is probably determined by upstream proteases that activate CASP7. Acts as an effector caspase involved in the execution phase of apoptosis: following cleavage and activation by initiator caspases (CASP8 and/or CASP9), mediates execution of apoptosis by catalyzing cleavage of proteins, such as CLSPN, PARP1, PTGES3 and YY1. Compared to CASP3, acts as a minor executioner caspase and cleaves a limited set of target proteins. Acts as a key regulator of the inflammatory response in response to bacterial infection by catalyzing cleavage and activation of the sphingomyelin phosphodiesterase SMPD1 in the extracellular milieu, thereby promoting membrane repair. Regulates pyroptosis in intestinal epithelial cells: cleaved and activated by CASP1 in response to S.typhimurium infection, promoting its secretion to the extracellular milieu, where it catalyzes activation of SMPD1, generating ceramides that repair membranes and counteract the action of gasdermin-D (GSDMD) pores. Regulates granzyme-mediated programmed cell death in hepatocytes: cleaved and activated by granzyme B (GZMB) in response to bacterial infection, promoting its secretion to the extracellular milieu, where it catalyzes activation of SMPD1, generating ceramides that repair membranes and counteract the action of perforin (PRF1) pores. Following cleavage by CASP1 in response to inflammasome activation, catalyzes processing and inactivation of PARP1, alleviating the transcription repressor activity of PARP1. Acts as an inhibitor of type I interferon production during virus-induced apoptosis by mediating cleavage of antiviral proteins CGAS, IRF3 and MAVS, thereby preventing cytokine overproduction (By similarity). Cleaves and activates sterol regulatory element binding proteins (SREBPs) (By similarity). Cleaves phospholipid scramblase proteins XKR4, XKR8 and XKR9 (By similarity). Cleaves BIRC6 following inhibition of BIRC6-caspase binding by DIABLO/SMAC (By similarity).</text>
</comment>
<comment type="catalytic activity">
    <reaction evidence="4">
        <text>Strict requirement for an Asp residue at position P1 and has a preferred cleavage sequence of Asp-Glu-Val-Asp-|-.</text>
        <dbReference type="EC" id="3.4.22.60"/>
    </reaction>
</comment>
<comment type="activity regulation">
    <text evidence="2 3 4">During activation, the N-terminal disordered prodomain is removed by cleavage. Concomitantly, double cleavage gives rise to a large Caspase-7 subunit p20 and a small Caspase-7 subunit p11. The two large and two small subunits then assemble to form the active CASP7 complex. Can be cleaved and activated by different caspases, depending on the context (By similarity). Cleaved and activated by initiator caspases (CASP8 and/or CASP9), leading to execution phase of apoptosis (By similarity). Cleavage and maturation by GZMB regulates granzyme-mediated programmed cell death. Cleavage and maturation by CASP1 regulates pyroptosis (By similarity). Inhibited by XIAP, which directly binds to the active site pocket and obstructs substrate entry. Phosphorylation at Ser-30 and Ser-239 by PAK2 inhibits its activity (By similarity). Inhibited by BIRC6; following inhibition of BIRC6-caspase binding by DIABLO/SMAC, BIRC6 is subjected to caspase cleavage, leading to an increase in active caspases (By similarity).</text>
</comment>
<comment type="subunit">
    <text evidence="3">Heterotetramer that consists of two anti-parallel arranged heterodimers, each one formed by a 20 kDa (p20) and a 11 kDa (p11) subunit. Interacts with XIAP (via its second BIR domain); inhibiting CASP7 activity. Interacts with BIRC6/bruce. Interacts with ATXN3 (short isoform 1). Interacts with HSPA5.</text>
</comment>
<comment type="subcellular location">
    <subcellularLocation>
        <location evidence="3">Cytoplasm</location>
        <location evidence="3">Cytosol</location>
    </subcellularLocation>
    <subcellularLocation>
        <location evidence="3">Nucleus</location>
    </subcellularLocation>
    <subcellularLocation>
        <location evidence="4">Secreted</location>
        <location evidence="4">Extracellular space</location>
    </subcellularLocation>
    <text evidence="4">Following cleavage and activation by CASP1 or granzyme B (GZMB), secreted into the extracellular milieu by passing through the gasdermin-D (GSDMD) pores or perforin (PRF1) pore, respectively.</text>
</comment>
<comment type="domain">
    <text evidence="3">The exosite polybasic region mediates non-specific RNA-binding, acting as a bridge for RNA-binding target proteins, such as PARP1. The exosite is also required for interaction with non-RNA-binding proteins, such as Hsp90 co-chaperone PTGES3.</text>
</comment>
<comment type="PTM">
    <text evidence="3 4">Cleavage by different proteases, such as granzyme B (GZMB), caspase-1 (CASP1), caspase-8 (CASP8) or caspase-9 (CASP9) generate the two active subunits. Its involvement in different programmed cell death processes is probably specified by the protease that activates CASP7 (By similarity). Cleaved and activated by initiator caspases (CASP8 and/or CASP9), leading to execution phase of apoptosis (By similarity). Cleavage and maturation by GZMB regulates granzyme-mediated programmed cell death. Cleaved and activated by CASP1 in response to bacterial infection (By similarity). Propeptide domains can also be cleaved efficiently by CASP3. Active heterodimers between the small subunit of caspase-7 and the large subunit of CASP3, and vice versa, also occur. Also cleaved at the N-terminus at alternative sites by CAPN1, leading to its activation (By similarity).</text>
</comment>
<comment type="PTM">
    <text evidence="3">Phosphorylation at Ser-30 and Ser-239 by PAK2 inhibits its activity. Phosphorylation at Ser-30 prevents cleavage and activation by initiator caspase CASP9, while phosphorylation at Ser-239 prevents thiol protease activity by preventing substrate-binding.</text>
</comment>
<comment type="PTM">
    <text evidence="2">Ubiquitinated by BIRC6; this activity is inhibited by DIABLO/SMAC.</text>
</comment>
<comment type="similarity">
    <text evidence="7">Belongs to the peptidase C14A family.</text>
</comment>
<protein>
    <recommendedName>
        <fullName>Caspase-7</fullName>
        <shortName>CASP-7</shortName>
        <ecNumber evidence="4">3.4.22.60</ecNumber>
    </recommendedName>
    <alternativeName>
        <fullName>Apoptotic protease Mch-3</fullName>
    </alternativeName>
    <alternativeName>
        <fullName>ICE-like apoptotic protease 3</fullName>
        <shortName>ICE-LAP3</shortName>
    </alternativeName>
    <alternativeName>
        <fullName>SREBP cleavage activity 2</fullName>
        <shortName>SCA-2</shortName>
    </alternativeName>
    <component>
        <recommendedName>
            <fullName>Caspase-7 subunit p20</fullName>
        </recommendedName>
    </component>
    <component>
        <recommendedName>
            <fullName>Caspase-7 subunit p11</fullName>
        </recommendedName>
    </component>
</protein>
<dbReference type="EC" id="3.4.22.60" evidence="4"/>
<dbReference type="EMBL" id="U47332">
    <property type="protein sequence ID" value="AAC52595.1"/>
    <property type="molecule type" value="mRNA"/>
</dbReference>
<dbReference type="RefSeq" id="NP_001268771.1">
    <property type="nucleotide sequence ID" value="NM_001281842.1"/>
</dbReference>
<dbReference type="SMR" id="P55214"/>
<dbReference type="STRING" id="10036.ENSMAUP00000009912"/>
<dbReference type="MEROPS" id="C14.004"/>
<dbReference type="GeneID" id="101825089"/>
<dbReference type="KEGG" id="maua:101825089"/>
<dbReference type="CTD" id="840"/>
<dbReference type="eggNOG" id="KOG3573">
    <property type="taxonomic scope" value="Eukaryota"/>
</dbReference>
<dbReference type="OrthoDB" id="6116485at2759"/>
<dbReference type="BRENDA" id="3.4.22.60">
    <property type="organism ID" value="3239"/>
</dbReference>
<dbReference type="Proteomes" id="UP000189706">
    <property type="component" value="Unplaced"/>
</dbReference>
<dbReference type="GO" id="GO:0005737">
    <property type="term" value="C:cytoplasm"/>
    <property type="evidence" value="ECO:0000250"/>
    <property type="project" value="UniProtKB"/>
</dbReference>
<dbReference type="GO" id="GO:0005829">
    <property type="term" value="C:cytosol"/>
    <property type="evidence" value="ECO:0000250"/>
    <property type="project" value="UniProtKB"/>
</dbReference>
<dbReference type="GO" id="GO:0005615">
    <property type="term" value="C:extracellular space"/>
    <property type="evidence" value="ECO:0000250"/>
    <property type="project" value="UniProtKB"/>
</dbReference>
<dbReference type="GO" id="GO:0005634">
    <property type="term" value="C:nucleus"/>
    <property type="evidence" value="ECO:0000250"/>
    <property type="project" value="UniProtKB"/>
</dbReference>
<dbReference type="GO" id="GO:0004190">
    <property type="term" value="F:aspartic-type endopeptidase activity"/>
    <property type="evidence" value="ECO:0000250"/>
    <property type="project" value="UniProtKB"/>
</dbReference>
<dbReference type="GO" id="GO:0004197">
    <property type="term" value="F:cysteine-type endopeptidase activity"/>
    <property type="evidence" value="ECO:0000250"/>
    <property type="project" value="UniProtKB"/>
</dbReference>
<dbReference type="GO" id="GO:0003723">
    <property type="term" value="F:RNA binding"/>
    <property type="evidence" value="ECO:0000250"/>
    <property type="project" value="UniProtKB"/>
</dbReference>
<dbReference type="GO" id="GO:0042742">
    <property type="term" value="P:defense response to bacterium"/>
    <property type="evidence" value="ECO:0000250"/>
    <property type="project" value="UniProtKB"/>
</dbReference>
<dbReference type="GO" id="GO:0097194">
    <property type="term" value="P:execution phase of apoptosis"/>
    <property type="evidence" value="ECO:0007669"/>
    <property type="project" value="TreeGrafter"/>
</dbReference>
<dbReference type="GO" id="GO:0070227">
    <property type="term" value="P:lymphocyte apoptotic process"/>
    <property type="evidence" value="ECO:0000250"/>
    <property type="project" value="UniProtKB"/>
</dbReference>
<dbReference type="GO" id="GO:0043525">
    <property type="term" value="P:positive regulation of neuron apoptotic process"/>
    <property type="evidence" value="ECO:0007669"/>
    <property type="project" value="TreeGrafter"/>
</dbReference>
<dbReference type="GO" id="GO:1905686">
    <property type="term" value="P:positive regulation of plasma membrane repair"/>
    <property type="evidence" value="ECO:0000250"/>
    <property type="project" value="UniProtKB"/>
</dbReference>
<dbReference type="GO" id="GO:0006508">
    <property type="term" value="P:proteolysis"/>
    <property type="evidence" value="ECO:0007669"/>
    <property type="project" value="UniProtKB-KW"/>
</dbReference>
<dbReference type="CDD" id="cd00032">
    <property type="entry name" value="CASc"/>
    <property type="match status" value="1"/>
</dbReference>
<dbReference type="FunFam" id="3.40.50.1460:FF:000001">
    <property type="entry name" value="Caspase-3 preproprotein"/>
    <property type="match status" value="1"/>
</dbReference>
<dbReference type="Gene3D" id="3.40.50.1460">
    <property type="match status" value="1"/>
</dbReference>
<dbReference type="InterPro" id="IPR029030">
    <property type="entry name" value="Caspase-like_dom_sf"/>
</dbReference>
<dbReference type="InterPro" id="IPR033139">
    <property type="entry name" value="Caspase_cys_AS"/>
</dbReference>
<dbReference type="InterPro" id="IPR016129">
    <property type="entry name" value="Caspase_his_AS"/>
</dbReference>
<dbReference type="InterPro" id="IPR002398">
    <property type="entry name" value="Pept_C14"/>
</dbReference>
<dbReference type="InterPro" id="IPR011600">
    <property type="entry name" value="Pept_C14_caspase"/>
</dbReference>
<dbReference type="InterPro" id="IPR002138">
    <property type="entry name" value="Pept_C14_p10"/>
</dbReference>
<dbReference type="InterPro" id="IPR001309">
    <property type="entry name" value="Pept_C14_p20"/>
</dbReference>
<dbReference type="InterPro" id="IPR015917">
    <property type="entry name" value="Pept_C14A"/>
</dbReference>
<dbReference type="PANTHER" id="PTHR10454">
    <property type="entry name" value="CASPASE"/>
    <property type="match status" value="1"/>
</dbReference>
<dbReference type="PANTHER" id="PTHR10454:SF31">
    <property type="entry name" value="CASPASE-7"/>
    <property type="match status" value="1"/>
</dbReference>
<dbReference type="Pfam" id="PF00656">
    <property type="entry name" value="Peptidase_C14"/>
    <property type="match status" value="1"/>
</dbReference>
<dbReference type="PIRSF" id="PIRSF038001">
    <property type="entry name" value="Caspase_ICE"/>
    <property type="match status" value="1"/>
</dbReference>
<dbReference type="PRINTS" id="PR00376">
    <property type="entry name" value="IL1BCENZYME"/>
</dbReference>
<dbReference type="SMART" id="SM00115">
    <property type="entry name" value="CASc"/>
    <property type="match status" value="1"/>
</dbReference>
<dbReference type="SUPFAM" id="SSF52129">
    <property type="entry name" value="Caspase-like"/>
    <property type="match status" value="1"/>
</dbReference>
<dbReference type="PROSITE" id="PS01122">
    <property type="entry name" value="CASPASE_CYS"/>
    <property type="match status" value="1"/>
</dbReference>
<dbReference type="PROSITE" id="PS01121">
    <property type="entry name" value="CASPASE_HIS"/>
    <property type="match status" value="1"/>
</dbReference>
<dbReference type="PROSITE" id="PS50207">
    <property type="entry name" value="CASPASE_P10"/>
    <property type="match status" value="1"/>
</dbReference>
<dbReference type="PROSITE" id="PS50208">
    <property type="entry name" value="CASPASE_P20"/>
    <property type="match status" value="1"/>
</dbReference>
<reference key="1">
    <citation type="journal article" date="1996" name="Proc. Natl. Acad. Sci. U.S.A.">
        <title>Purification and cDNA cloning of a second apoptosis-related cysteine protease that cleaves and activates sterol regulatory element binding proteins.</title>
        <authorList>
            <person name="Pai J.-T."/>
            <person name="Brown M.S."/>
            <person name="Goldstein J.L."/>
        </authorList>
    </citation>
    <scope>NUCLEOTIDE SEQUENCE [MRNA]</scope>
    <scope>PARTIAL PROTEIN SEQUENCE</scope>
    <source>
        <strain>Syrian</strain>
        <tissue>Liver</tissue>
    </source>
</reference>
<organism>
    <name type="scientific">Mesocricetus auratus</name>
    <name type="common">Golden hamster</name>
    <dbReference type="NCBI Taxonomy" id="10036"/>
    <lineage>
        <taxon>Eukaryota</taxon>
        <taxon>Metazoa</taxon>
        <taxon>Chordata</taxon>
        <taxon>Craniata</taxon>
        <taxon>Vertebrata</taxon>
        <taxon>Euteleostomi</taxon>
        <taxon>Mammalia</taxon>
        <taxon>Eutheria</taxon>
        <taxon>Euarchontoglires</taxon>
        <taxon>Glires</taxon>
        <taxon>Rodentia</taxon>
        <taxon>Myomorpha</taxon>
        <taxon>Muroidea</taxon>
        <taxon>Cricetidae</taxon>
        <taxon>Cricetinae</taxon>
        <taxon>Mesocricetus</taxon>
    </lineage>
</organism>
<name>CASP7_MESAU</name>
<evidence type="ECO:0000250" key="1">
    <source>
        <dbReference type="UniProtKB" id="P29466"/>
    </source>
</evidence>
<evidence type="ECO:0000250" key="2">
    <source>
        <dbReference type="UniProtKB" id="P42574"/>
    </source>
</evidence>
<evidence type="ECO:0000250" key="3">
    <source>
        <dbReference type="UniProtKB" id="P55210"/>
    </source>
</evidence>
<evidence type="ECO:0000250" key="4">
    <source>
        <dbReference type="UniProtKB" id="P97864"/>
    </source>
</evidence>
<evidence type="ECO:0000256" key="5">
    <source>
        <dbReference type="SAM" id="MobiDB-lite"/>
    </source>
</evidence>
<evidence type="ECO:0000269" key="6">
    <source>
    </source>
</evidence>
<evidence type="ECO:0000305" key="7"/>
<keyword id="KW-0007">Acetylation</keyword>
<keyword id="KW-0021">Allosteric enzyme</keyword>
<keyword id="KW-0053">Apoptosis</keyword>
<keyword id="KW-0963">Cytoplasm</keyword>
<keyword id="KW-0903">Direct protein sequencing</keyword>
<keyword id="KW-0378">Hydrolase</keyword>
<keyword id="KW-0539">Nucleus</keyword>
<keyword id="KW-0597">Phosphoprotein</keyword>
<keyword id="KW-0645">Protease</keyword>
<keyword id="KW-1185">Reference proteome</keyword>
<keyword id="KW-0694">RNA-binding</keyword>
<keyword id="KW-0964">Secreted</keyword>
<keyword id="KW-0788">Thiol protease</keyword>
<keyword id="KW-0832">Ubl conjugation</keyword>
<keyword id="KW-0865">Zymogen</keyword>